<protein>
    <recommendedName>
        <fullName evidence="1">Autonomous glycyl radical cofactor</fullName>
    </recommendedName>
</protein>
<name>GRCA_ACTP2</name>
<evidence type="ECO:0000255" key="1">
    <source>
        <dbReference type="HAMAP-Rule" id="MF_00806"/>
    </source>
</evidence>
<organism>
    <name type="scientific">Actinobacillus pleuropneumoniae serotype 5b (strain L20)</name>
    <dbReference type="NCBI Taxonomy" id="416269"/>
    <lineage>
        <taxon>Bacteria</taxon>
        <taxon>Pseudomonadati</taxon>
        <taxon>Pseudomonadota</taxon>
        <taxon>Gammaproteobacteria</taxon>
        <taxon>Pasteurellales</taxon>
        <taxon>Pasteurellaceae</taxon>
        <taxon>Actinobacillus</taxon>
    </lineage>
</organism>
<dbReference type="EMBL" id="CP000569">
    <property type="protein sequence ID" value="ABN73465.1"/>
    <property type="molecule type" value="Genomic_DNA"/>
</dbReference>
<dbReference type="RefSeq" id="WP_005596358.1">
    <property type="nucleotide sequence ID" value="NC_009053.1"/>
</dbReference>
<dbReference type="SMR" id="A3MZ79"/>
<dbReference type="STRING" id="416269.APL_0361"/>
<dbReference type="EnsemblBacteria" id="ABN73465">
    <property type="protein sequence ID" value="ABN73465"/>
    <property type="gene ID" value="APL_0361"/>
</dbReference>
<dbReference type="GeneID" id="48598527"/>
<dbReference type="KEGG" id="apl:APL_0361"/>
<dbReference type="eggNOG" id="COG3445">
    <property type="taxonomic scope" value="Bacteria"/>
</dbReference>
<dbReference type="HOGENOM" id="CLU_133780_0_0_6"/>
<dbReference type="Proteomes" id="UP000001432">
    <property type="component" value="Chromosome"/>
</dbReference>
<dbReference type="GO" id="GO:0005829">
    <property type="term" value="C:cytosol"/>
    <property type="evidence" value="ECO:0007669"/>
    <property type="project" value="TreeGrafter"/>
</dbReference>
<dbReference type="GO" id="GO:0008861">
    <property type="term" value="F:formate C-acetyltransferase activity"/>
    <property type="evidence" value="ECO:0007669"/>
    <property type="project" value="TreeGrafter"/>
</dbReference>
<dbReference type="FunFam" id="3.20.70.20:FF:000002">
    <property type="entry name" value="Autonomous glycyl radical cofactor"/>
    <property type="match status" value="1"/>
</dbReference>
<dbReference type="Gene3D" id="3.20.70.20">
    <property type="match status" value="1"/>
</dbReference>
<dbReference type="HAMAP" id="MF_00806">
    <property type="entry name" value="GrcA"/>
    <property type="match status" value="1"/>
</dbReference>
<dbReference type="InterPro" id="IPR050244">
    <property type="entry name" value="Auton_GlycylRad_Cofactor"/>
</dbReference>
<dbReference type="InterPro" id="IPR019777">
    <property type="entry name" value="Form_AcTrfase_GR_CS"/>
</dbReference>
<dbReference type="InterPro" id="IPR001150">
    <property type="entry name" value="Gly_radical"/>
</dbReference>
<dbReference type="InterPro" id="IPR011140">
    <property type="entry name" value="Glycyl_radical_cofactor_GrcA"/>
</dbReference>
<dbReference type="NCBIfam" id="TIGR04365">
    <property type="entry name" value="spare_glycyl"/>
    <property type="match status" value="1"/>
</dbReference>
<dbReference type="PANTHER" id="PTHR30191">
    <property type="entry name" value="FORMATE ACETYLTRANSFERASE"/>
    <property type="match status" value="1"/>
</dbReference>
<dbReference type="PANTHER" id="PTHR30191:SF0">
    <property type="entry name" value="FORMATE ACETYLTRANSFERASE 1"/>
    <property type="match status" value="1"/>
</dbReference>
<dbReference type="Pfam" id="PF01228">
    <property type="entry name" value="Gly_radical"/>
    <property type="match status" value="1"/>
</dbReference>
<dbReference type="PIRSF" id="PIRSF000378">
    <property type="entry name" value="Gly_radicl_yfiD"/>
    <property type="match status" value="1"/>
</dbReference>
<dbReference type="SUPFAM" id="SSF51998">
    <property type="entry name" value="PFL-like glycyl radical enzymes"/>
    <property type="match status" value="1"/>
</dbReference>
<dbReference type="PROSITE" id="PS00850">
    <property type="entry name" value="GLY_RADICAL_1"/>
    <property type="match status" value="1"/>
</dbReference>
<dbReference type="PROSITE" id="PS51149">
    <property type="entry name" value="GLY_RADICAL_2"/>
    <property type="match status" value="1"/>
</dbReference>
<accession>A3MZ79</accession>
<keyword id="KW-0556">Organic radical</keyword>
<keyword id="KW-1185">Reference proteome</keyword>
<gene>
    <name evidence="1" type="primary">grcA</name>
    <name type="ordered locus">APL_0361</name>
</gene>
<comment type="function">
    <text evidence="1">Acts as a radical domain for damaged PFL and possibly other radical proteins.</text>
</comment>
<reference key="1">
    <citation type="journal article" date="2008" name="J. Bacteriol.">
        <title>The complete genome sequence of Actinobacillus pleuropneumoniae L20 (serotype 5b).</title>
        <authorList>
            <person name="Foote S.J."/>
            <person name="Bosse J.T."/>
            <person name="Bouevitch A.B."/>
            <person name="Langford P.R."/>
            <person name="Young N.M."/>
            <person name="Nash J.H.E."/>
        </authorList>
    </citation>
    <scope>NUCLEOTIDE SEQUENCE [LARGE SCALE GENOMIC DNA]</scope>
    <source>
        <strain>L20</strain>
    </source>
</reference>
<proteinExistence type="inferred from homology"/>
<feature type="chain" id="PRO_1000083713" description="Autonomous glycyl radical cofactor">
    <location>
        <begin position="1"/>
        <end position="128"/>
    </location>
</feature>
<feature type="domain" description="Glycine radical" evidence="1">
    <location>
        <begin position="5"/>
        <end position="128"/>
    </location>
</feature>
<feature type="modified residue" description="Glycine radical" evidence="1">
    <location>
        <position position="103"/>
    </location>
</feature>
<sequence length="128" mass="14434">MIKGVQITESSNSNLVNSFWLLDEEKNEARCIAAKGDVYKEDQVIAISELGQIAYREVPVNVAPTIKVEGGQHLNVNVLRRETLEDAVKNPEKYPQLTIRVSGYAVRFNSLTPEQQRDVITRTFTESL</sequence>